<protein>
    <recommendedName>
        <fullName evidence="1">UPF0212 protein MJ0068</fullName>
    </recommendedName>
</protein>
<feature type="chain" id="PRO_0000068276" description="UPF0212 protein MJ0068">
    <location>
        <begin position="1"/>
        <end position="115"/>
    </location>
</feature>
<accession>Q60372</accession>
<organism>
    <name type="scientific">Methanocaldococcus jannaschii (strain ATCC 43067 / DSM 2661 / JAL-1 / JCM 10045 / NBRC 100440)</name>
    <name type="common">Methanococcus jannaschii</name>
    <dbReference type="NCBI Taxonomy" id="243232"/>
    <lineage>
        <taxon>Archaea</taxon>
        <taxon>Methanobacteriati</taxon>
        <taxon>Methanobacteriota</taxon>
        <taxon>Methanomada group</taxon>
        <taxon>Methanococci</taxon>
        <taxon>Methanococcales</taxon>
        <taxon>Methanocaldococcaceae</taxon>
        <taxon>Methanocaldococcus</taxon>
    </lineage>
</organism>
<name>Y068_METJA</name>
<gene>
    <name type="ordered locus">MJ0068</name>
</gene>
<proteinExistence type="inferred from homology"/>
<reference key="1">
    <citation type="journal article" date="1996" name="Science">
        <title>Complete genome sequence of the methanogenic archaeon, Methanococcus jannaschii.</title>
        <authorList>
            <person name="Bult C.J."/>
            <person name="White O."/>
            <person name="Olsen G.J."/>
            <person name="Zhou L."/>
            <person name="Fleischmann R.D."/>
            <person name="Sutton G.G."/>
            <person name="Blake J.A."/>
            <person name="FitzGerald L.M."/>
            <person name="Clayton R.A."/>
            <person name="Gocayne J.D."/>
            <person name="Kerlavage A.R."/>
            <person name="Dougherty B.A."/>
            <person name="Tomb J.-F."/>
            <person name="Adams M.D."/>
            <person name="Reich C.I."/>
            <person name="Overbeek R."/>
            <person name="Kirkness E.F."/>
            <person name="Weinstock K.G."/>
            <person name="Merrick J.M."/>
            <person name="Glodek A."/>
            <person name="Scott J.L."/>
            <person name="Geoghagen N.S.M."/>
            <person name="Weidman J.F."/>
            <person name="Fuhrmann J.L."/>
            <person name="Nguyen D."/>
            <person name="Utterback T.R."/>
            <person name="Kelley J.M."/>
            <person name="Peterson J.D."/>
            <person name="Sadow P.W."/>
            <person name="Hanna M.C."/>
            <person name="Cotton M.D."/>
            <person name="Roberts K.M."/>
            <person name="Hurst M.A."/>
            <person name="Kaine B.P."/>
            <person name="Borodovsky M."/>
            <person name="Klenk H.-P."/>
            <person name="Fraser C.M."/>
            <person name="Smith H.O."/>
            <person name="Woese C.R."/>
            <person name="Venter J.C."/>
        </authorList>
    </citation>
    <scope>NUCLEOTIDE SEQUENCE [LARGE SCALE GENOMIC DNA]</scope>
    <source>
        <strain>ATCC 43067 / DSM 2661 / JAL-1 / JCM 10045 / NBRC 100440</strain>
    </source>
</reference>
<comment type="similarity">
    <text evidence="1">Belongs to the UPF0212 family.</text>
</comment>
<evidence type="ECO:0000255" key="1">
    <source>
        <dbReference type="HAMAP-Rule" id="MF_01223"/>
    </source>
</evidence>
<sequence>MPNYHVTLQAAYIVRNVDDVEDAISVTISQIGKMLNKEGLNYVDIDIGLTICPKCGELVDCVLVVARTALVGVLLSMKVFNAESPEHAIRIAKATIGKVLKNIPLEPVDVVELEK</sequence>
<keyword id="KW-1185">Reference proteome</keyword>
<dbReference type="EMBL" id="L77117">
    <property type="protein sequence ID" value="AAB98047.1"/>
    <property type="molecule type" value="Genomic_DNA"/>
</dbReference>
<dbReference type="PIR" id="D64308">
    <property type="entry name" value="D64308"/>
</dbReference>
<dbReference type="RefSeq" id="WP_010869560.1">
    <property type="nucleotide sequence ID" value="NC_000909.1"/>
</dbReference>
<dbReference type="FunCoup" id="Q60372">
    <property type="interactions" value="1"/>
</dbReference>
<dbReference type="STRING" id="243232.MJ_0068"/>
<dbReference type="PaxDb" id="243232-MJ_0068"/>
<dbReference type="EnsemblBacteria" id="AAB98047">
    <property type="protein sequence ID" value="AAB98047"/>
    <property type="gene ID" value="MJ_0068"/>
</dbReference>
<dbReference type="GeneID" id="65883900"/>
<dbReference type="KEGG" id="mja:MJ_0068"/>
<dbReference type="eggNOG" id="arCOG02119">
    <property type="taxonomic scope" value="Archaea"/>
</dbReference>
<dbReference type="HOGENOM" id="CLU_138334_0_0_2"/>
<dbReference type="InParanoid" id="Q60372"/>
<dbReference type="OrthoDB" id="63517at2157"/>
<dbReference type="PhylomeDB" id="Q60372"/>
<dbReference type="Proteomes" id="UP000000805">
    <property type="component" value="Chromosome"/>
</dbReference>
<dbReference type="HAMAP" id="MF_01223">
    <property type="entry name" value="UPF0212"/>
    <property type="match status" value="1"/>
</dbReference>
<dbReference type="InterPro" id="IPR007564">
    <property type="entry name" value="UPF0212"/>
</dbReference>
<dbReference type="NCBIfam" id="NF003035">
    <property type="entry name" value="PRK03922.1"/>
    <property type="match status" value="1"/>
</dbReference>
<dbReference type="PANTHER" id="PTHR42199">
    <property type="entry name" value="UPF0212 PROTEIN MJ0068"/>
    <property type="match status" value="1"/>
</dbReference>
<dbReference type="PANTHER" id="PTHR42199:SF1">
    <property type="entry name" value="UPF0212 PROTEIN TK1194"/>
    <property type="match status" value="1"/>
</dbReference>
<dbReference type="Pfam" id="PF04475">
    <property type="entry name" value="DUF555"/>
    <property type="match status" value="1"/>
</dbReference>
<dbReference type="PIRSF" id="PIRSF016934">
    <property type="entry name" value="UCP016934"/>
    <property type="match status" value="1"/>
</dbReference>